<organism>
    <name type="scientific">Synechococcus elongatus (strain ATCC 33912 / PCC 7942 / FACHB-805)</name>
    <name type="common">Anacystis nidulans R2</name>
    <dbReference type="NCBI Taxonomy" id="1140"/>
    <lineage>
        <taxon>Bacteria</taxon>
        <taxon>Bacillati</taxon>
        <taxon>Cyanobacteriota</taxon>
        <taxon>Cyanophyceae</taxon>
        <taxon>Synechococcales</taxon>
        <taxon>Synechococcaceae</taxon>
        <taxon>Synechococcus</taxon>
    </lineage>
</organism>
<keyword id="KW-0533">Nickel</keyword>
<keyword id="KW-1185">Reference proteome</keyword>
<feature type="chain" id="PRO_1000136694" description="Putative nickel insertion protein">
    <location>
        <begin position="1"/>
        <end position="402"/>
    </location>
</feature>
<dbReference type="EMBL" id="CP000100">
    <property type="protein sequence ID" value="ABB58381.1"/>
    <property type="molecule type" value="Genomic_DNA"/>
</dbReference>
<dbReference type="SMR" id="Q31KN8"/>
<dbReference type="STRING" id="1140.Synpcc7942_2351"/>
<dbReference type="PaxDb" id="1140-Synpcc7942_2351"/>
<dbReference type="KEGG" id="syf:Synpcc7942_2351"/>
<dbReference type="eggNOG" id="COG1641">
    <property type="taxonomic scope" value="Bacteria"/>
</dbReference>
<dbReference type="HOGENOM" id="CLU_028523_2_1_3"/>
<dbReference type="OrthoDB" id="9765625at2"/>
<dbReference type="BioCyc" id="SYNEL:SYNPCC7942_2351-MONOMER"/>
<dbReference type="Proteomes" id="UP000889800">
    <property type="component" value="Chromosome"/>
</dbReference>
<dbReference type="GO" id="GO:0016829">
    <property type="term" value="F:lyase activity"/>
    <property type="evidence" value="ECO:0007669"/>
    <property type="project" value="UniProtKB-UniRule"/>
</dbReference>
<dbReference type="GO" id="GO:0016151">
    <property type="term" value="F:nickel cation binding"/>
    <property type="evidence" value="ECO:0007669"/>
    <property type="project" value="UniProtKB-UniRule"/>
</dbReference>
<dbReference type="Gene3D" id="3.10.20.300">
    <property type="entry name" value="mk0293 like domain"/>
    <property type="match status" value="1"/>
</dbReference>
<dbReference type="Gene3D" id="3.30.70.1380">
    <property type="entry name" value="Transcriptional regulatory protein pf0864 domain like"/>
    <property type="match status" value="1"/>
</dbReference>
<dbReference type="HAMAP" id="MF_01074">
    <property type="entry name" value="LarC"/>
    <property type="match status" value="1"/>
</dbReference>
<dbReference type="InterPro" id="IPR002822">
    <property type="entry name" value="Ni_insertion"/>
</dbReference>
<dbReference type="NCBIfam" id="TIGR00299">
    <property type="entry name" value="nickel pincer cofactor biosynthesis protein LarC"/>
    <property type="match status" value="1"/>
</dbReference>
<dbReference type="PANTHER" id="PTHR36566">
    <property type="entry name" value="NICKEL INSERTION PROTEIN-RELATED"/>
    <property type="match status" value="1"/>
</dbReference>
<dbReference type="PANTHER" id="PTHR36566:SF1">
    <property type="entry name" value="PYRIDINIUM-3,5-BISTHIOCARBOXYLIC ACID MONONUCLEOTIDE NICKEL INSERTION PROTEIN"/>
    <property type="match status" value="1"/>
</dbReference>
<dbReference type="Pfam" id="PF01969">
    <property type="entry name" value="Ni_insertion"/>
    <property type="match status" value="1"/>
</dbReference>
<accession>Q31KN8</accession>
<evidence type="ECO:0000255" key="1">
    <source>
        <dbReference type="HAMAP-Rule" id="MF_01074"/>
    </source>
</evidence>
<gene>
    <name type="ordered locus">Synpcc7942_2351</name>
</gene>
<sequence>MTQIAYFDCPTGIAGNMCLGALVDAGVPLSYLEQQLQRLSLSEPYQLVATPVLRQGMAATYVEVQIEAAPHAHRHLSHIVALIEAAGLPDRVRDWSIAVFQQLAIAEAAVHGVTPEQVHFHEVGATDAIVDIVGTCLGLDYLGIEAVYCSALPTGGGTVKAAHGQLSVPVPAVLRLWQLRQVPVYSNGIERELVTPTGAAIAVTLAKSFGPPPSLQLQKTGWGAGSHDLPIPNLLKLWIGTASDLVMTPQSPEGSLETVQVIETQIDDCSPQVLAYVSEQLLAQGALEVFSQAITMKKGRLGTLLTIICQPDQQAACETILFRETTTIGLRFRREQRRVLPRRRDRVQTPWGEVRVKVAGDPQSPLTVQPEYEDCRAIAQAQQIALHHIQTVAQQQWQQENA</sequence>
<protein>
    <recommendedName>
        <fullName evidence="1">Putative nickel insertion protein</fullName>
    </recommendedName>
</protein>
<proteinExistence type="inferred from homology"/>
<comment type="similarity">
    <text evidence="1">Belongs to the LarC family.</text>
</comment>
<name>Y2351_SYNE7</name>
<reference key="1">
    <citation type="submission" date="2005-08" db="EMBL/GenBank/DDBJ databases">
        <title>Complete sequence of chromosome 1 of Synechococcus elongatus PCC 7942.</title>
        <authorList>
            <consortium name="US DOE Joint Genome Institute"/>
            <person name="Copeland A."/>
            <person name="Lucas S."/>
            <person name="Lapidus A."/>
            <person name="Barry K."/>
            <person name="Detter J.C."/>
            <person name="Glavina T."/>
            <person name="Hammon N."/>
            <person name="Israni S."/>
            <person name="Pitluck S."/>
            <person name="Schmutz J."/>
            <person name="Larimer F."/>
            <person name="Land M."/>
            <person name="Kyrpides N."/>
            <person name="Lykidis A."/>
            <person name="Golden S."/>
            <person name="Richardson P."/>
        </authorList>
    </citation>
    <scope>NUCLEOTIDE SEQUENCE [LARGE SCALE GENOMIC DNA]</scope>
    <source>
        <strain>ATCC 33912 / PCC 7942 / FACHB-805</strain>
    </source>
</reference>